<reference key="1">
    <citation type="submission" date="2008-06" db="EMBL/GenBank/DDBJ databases">
        <title>Complete sequence of Chlorobaculum parvum NCIB 8327.</title>
        <authorList>
            <consortium name="US DOE Joint Genome Institute"/>
            <person name="Lucas S."/>
            <person name="Copeland A."/>
            <person name="Lapidus A."/>
            <person name="Glavina del Rio T."/>
            <person name="Dalin E."/>
            <person name="Tice H."/>
            <person name="Bruce D."/>
            <person name="Goodwin L."/>
            <person name="Pitluck S."/>
            <person name="Schmutz J."/>
            <person name="Larimer F."/>
            <person name="Land M."/>
            <person name="Hauser L."/>
            <person name="Kyrpides N."/>
            <person name="Mikhailova N."/>
            <person name="Zhao F."/>
            <person name="Li T."/>
            <person name="Liu Z."/>
            <person name="Overmann J."/>
            <person name="Bryant D.A."/>
            <person name="Richardson P."/>
        </authorList>
    </citation>
    <scope>NUCLEOTIDE SEQUENCE [LARGE SCALE GENOMIC DNA]</scope>
    <source>
        <strain>DSM 263 / NCIMB 8327</strain>
    </source>
</reference>
<accession>B3QR99</accession>
<dbReference type="EMBL" id="CP001099">
    <property type="protein sequence ID" value="ACF10632.1"/>
    <property type="molecule type" value="Genomic_DNA"/>
</dbReference>
<dbReference type="RefSeq" id="WP_012501466.1">
    <property type="nucleotide sequence ID" value="NC_011027.1"/>
</dbReference>
<dbReference type="SMR" id="B3QR99"/>
<dbReference type="STRING" id="517417.Cpar_0205"/>
<dbReference type="KEGG" id="cpc:Cpar_0205"/>
<dbReference type="eggNOG" id="COG0203">
    <property type="taxonomic scope" value="Bacteria"/>
</dbReference>
<dbReference type="HOGENOM" id="CLU_074407_0_1_10"/>
<dbReference type="OrthoDB" id="9809073at2"/>
<dbReference type="Proteomes" id="UP000008811">
    <property type="component" value="Chromosome"/>
</dbReference>
<dbReference type="GO" id="GO:0022625">
    <property type="term" value="C:cytosolic large ribosomal subunit"/>
    <property type="evidence" value="ECO:0007669"/>
    <property type="project" value="TreeGrafter"/>
</dbReference>
<dbReference type="GO" id="GO:0003735">
    <property type="term" value="F:structural constituent of ribosome"/>
    <property type="evidence" value="ECO:0007669"/>
    <property type="project" value="InterPro"/>
</dbReference>
<dbReference type="GO" id="GO:0006412">
    <property type="term" value="P:translation"/>
    <property type="evidence" value="ECO:0007669"/>
    <property type="project" value="UniProtKB-UniRule"/>
</dbReference>
<dbReference type="Gene3D" id="3.90.1030.10">
    <property type="entry name" value="Ribosomal protein L17"/>
    <property type="match status" value="1"/>
</dbReference>
<dbReference type="HAMAP" id="MF_01368">
    <property type="entry name" value="Ribosomal_bL17"/>
    <property type="match status" value="1"/>
</dbReference>
<dbReference type="InterPro" id="IPR000456">
    <property type="entry name" value="Ribosomal_bL17"/>
</dbReference>
<dbReference type="InterPro" id="IPR047859">
    <property type="entry name" value="Ribosomal_bL17_CS"/>
</dbReference>
<dbReference type="InterPro" id="IPR036373">
    <property type="entry name" value="Ribosomal_bL17_sf"/>
</dbReference>
<dbReference type="NCBIfam" id="TIGR00059">
    <property type="entry name" value="L17"/>
    <property type="match status" value="1"/>
</dbReference>
<dbReference type="PANTHER" id="PTHR14413:SF16">
    <property type="entry name" value="LARGE RIBOSOMAL SUBUNIT PROTEIN BL17M"/>
    <property type="match status" value="1"/>
</dbReference>
<dbReference type="PANTHER" id="PTHR14413">
    <property type="entry name" value="RIBOSOMAL PROTEIN L17"/>
    <property type="match status" value="1"/>
</dbReference>
<dbReference type="Pfam" id="PF01196">
    <property type="entry name" value="Ribosomal_L17"/>
    <property type="match status" value="1"/>
</dbReference>
<dbReference type="SUPFAM" id="SSF64263">
    <property type="entry name" value="Prokaryotic ribosomal protein L17"/>
    <property type="match status" value="1"/>
</dbReference>
<dbReference type="PROSITE" id="PS01167">
    <property type="entry name" value="RIBOSOMAL_L17"/>
    <property type="match status" value="1"/>
</dbReference>
<protein>
    <recommendedName>
        <fullName evidence="1">Large ribosomal subunit protein bL17</fullName>
    </recommendedName>
    <alternativeName>
        <fullName evidence="3">50S ribosomal protein L17</fullName>
    </alternativeName>
</protein>
<sequence>MRKVKPARKLGRTTAHRKATLSNLSTQLLIHKRIETTEAKAKETRKVVEKIITKARKGTHHAQREIFSALRNKEAVQELFEEIVGRIGSRNGGYTRIIKLAPRFGDAAKMAVIELVDFAEAPAAASTAAKQDRAKRVKGSKKAETEKEGGESAE</sequence>
<comment type="subunit">
    <text evidence="1">Part of the 50S ribosomal subunit. Contacts protein L32.</text>
</comment>
<comment type="similarity">
    <text evidence="1">Belongs to the bacterial ribosomal protein bL17 family.</text>
</comment>
<name>RL17_CHLP8</name>
<organism>
    <name type="scientific">Chlorobaculum parvum (strain DSM 263 / NCIMB 8327)</name>
    <name type="common">Chlorobium vibrioforme subsp. thiosulfatophilum</name>
    <dbReference type="NCBI Taxonomy" id="517417"/>
    <lineage>
        <taxon>Bacteria</taxon>
        <taxon>Pseudomonadati</taxon>
        <taxon>Chlorobiota</taxon>
        <taxon>Chlorobiia</taxon>
        <taxon>Chlorobiales</taxon>
        <taxon>Chlorobiaceae</taxon>
        <taxon>Chlorobaculum</taxon>
    </lineage>
</organism>
<proteinExistence type="inferred from homology"/>
<feature type="chain" id="PRO_1000144395" description="Large ribosomal subunit protein bL17">
    <location>
        <begin position="1"/>
        <end position="154"/>
    </location>
</feature>
<feature type="region of interest" description="Disordered" evidence="2">
    <location>
        <begin position="127"/>
        <end position="154"/>
    </location>
</feature>
<feature type="compositionally biased region" description="Basic and acidic residues" evidence="2">
    <location>
        <begin position="141"/>
        <end position="154"/>
    </location>
</feature>
<gene>
    <name evidence="1" type="primary">rplQ</name>
    <name type="ordered locus">Cpar_0205</name>
</gene>
<evidence type="ECO:0000255" key="1">
    <source>
        <dbReference type="HAMAP-Rule" id="MF_01368"/>
    </source>
</evidence>
<evidence type="ECO:0000256" key="2">
    <source>
        <dbReference type="SAM" id="MobiDB-lite"/>
    </source>
</evidence>
<evidence type="ECO:0000305" key="3"/>
<keyword id="KW-0687">Ribonucleoprotein</keyword>
<keyword id="KW-0689">Ribosomal protein</keyword>